<sequence length="217" mass="22850">MDNARFEDQLAAGCRALGVTVAADLGPRLQRLMSELLKWNAKVNLTAITAPEEVLEKHFLDSLAVLPEVTGAATLLDLGAGAGFPGLPLKLALPALGVTLVDTVGKKVAFIKAAAASLGLQGVRGLHARAEGQPETEGIPRAEVLIARAFMDLPDWLALAPAYVEPGGRVVAMLGKPQTDAELAARAAERQLRVVSARAYRLPFSGAERQVAVFAKE</sequence>
<evidence type="ECO:0000255" key="1">
    <source>
        <dbReference type="HAMAP-Rule" id="MF_00074"/>
    </source>
</evidence>
<dbReference type="EC" id="2.1.1.170" evidence="1"/>
<dbReference type="EMBL" id="CP000113">
    <property type="protein sequence ID" value="ABF88142.1"/>
    <property type="molecule type" value="Genomic_DNA"/>
</dbReference>
<dbReference type="RefSeq" id="WP_011557395.1">
    <property type="nucleotide sequence ID" value="NC_008095.1"/>
</dbReference>
<dbReference type="SMR" id="Q1CVH7"/>
<dbReference type="STRING" id="246197.MXAN_7493"/>
<dbReference type="EnsemblBacteria" id="ABF88142">
    <property type="protein sequence ID" value="ABF88142"/>
    <property type="gene ID" value="MXAN_7493"/>
</dbReference>
<dbReference type="GeneID" id="41364626"/>
<dbReference type="KEGG" id="mxa:MXAN_7493"/>
<dbReference type="eggNOG" id="COG0357">
    <property type="taxonomic scope" value="Bacteria"/>
</dbReference>
<dbReference type="HOGENOM" id="CLU_065341_2_0_7"/>
<dbReference type="OrthoDB" id="9808773at2"/>
<dbReference type="Proteomes" id="UP000002402">
    <property type="component" value="Chromosome"/>
</dbReference>
<dbReference type="GO" id="GO:0005829">
    <property type="term" value="C:cytosol"/>
    <property type="evidence" value="ECO:0007669"/>
    <property type="project" value="TreeGrafter"/>
</dbReference>
<dbReference type="GO" id="GO:0070043">
    <property type="term" value="F:rRNA (guanine-N7-)-methyltransferase activity"/>
    <property type="evidence" value="ECO:0007669"/>
    <property type="project" value="UniProtKB-UniRule"/>
</dbReference>
<dbReference type="Gene3D" id="3.40.50.150">
    <property type="entry name" value="Vaccinia Virus protein VP39"/>
    <property type="match status" value="1"/>
</dbReference>
<dbReference type="HAMAP" id="MF_00074">
    <property type="entry name" value="16SrRNA_methyltr_G"/>
    <property type="match status" value="1"/>
</dbReference>
<dbReference type="InterPro" id="IPR003682">
    <property type="entry name" value="rRNA_ssu_MeTfrase_G"/>
</dbReference>
<dbReference type="InterPro" id="IPR029063">
    <property type="entry name" value="SAM-dependent_MTases_sf"/>
</dbReference>
<dbReference type="NCBIfam" id="TIGR00138">
    <property type="entry name" value="rsmG_gidB"/>
    <property type="match status" value="1"/>
</dbReference>
<dbReference type="PANTHER" id="PTHR31760">
    <property type="entry name" value="S-ADENOSYL-L-METHIONINE-DEPENDENT METHYLTRANSFERASES SUPERFAMILY PROTEIN"/>
    <property type="match status" value="1"/>
</dbReference>
<dbReference type="PANTHER" id="PTHR31760:SF0">
    <property type="entry name" value="S-ADENOSYL-L-METHIONINE-DEPENDENT METHYLTRANSFERASES SUPERFAMILY PROTEIN"/>
    <property type="match status" value="1"/>
</dbReference>
<dbReference type="Pfam" id="PF02527">
    <property type="entry name" value="GidB"/>
    <property type="match status" value="1"/>
</dbReference>
<dbReference type="PIRSF" id="PIRSF003078">
    <property type="entry name" value="GidB"/>
    <property type="match status" value="1"/>
</dbReference>
<dbReference type="SUPFAM" id="SSF53335">
    <property type="entry name" value="S-adenosyl-L-methionine-dependent methyltransferases"/>
    <property type="match status" value="1"/>
</dbReference>
<keyword id="KW-0963">Cytoplasm</keyword>
<keyword id="KW-0489">Methyltransferase</keyword>
<keyword id="KW-1185">Reference proteome</keyword>
<keyword id="KW-0698">rRNA processing</keyword>
<keyword id="KW-0949">S-adenosyl-L-methionine</keyword>
<keyword id="KW-0808">Transferase</keyword>
<reference key="1">
    <citation type="journal article" date="2006" name="Proc. Natl. Acad. Sci. U.S.A.">
        <title>Evolution of sensory complexity recorded in a myxobacterial genome.</title>
        <authorList>
            <person name="Goldman B.S."/>
            <person name="Nierman W.C."/>
            <person name="Kaiser D."/>
            <person name="Slater S.C."/>
            <person name="Durkin A.S."/>
            <person name="Eisen J.A."/>
            <person name="Ronning C.M."/>
            <person name="Barbazuk W.B."/>
            <person name="Blanchard M."/>
            <person name="Field C."/>
            <person name="Halling C."/>
            <person name="Hinkle G."/>
            <person name="Iartchuk O."/>
            <person name="Kim H.S."/>
            <person name="Mackenzie C."/>
            <person name="Madupu R."/>
            <person name="Miller N."/>
            <person name="Shvartsbeyn A."/>
            <person name="Sullivan S.A."/>
            <person name="Vaudin M."/>
            <person name="Wiegand R."/>
            <person name="Kaplan H.B."/>
        </authorList>
    </citation>
    <scope>NUCLEOTIDE SEQUENCE [LARGE SCALE GENOMIC DNA]</scope>
    <source>
        <strain>DK1622</strain>
    </source>
</reference>
<accession>Q1CVH7</accession>
<organism>
    <name type="scientific">Myxococcus xanthus (strain DK1622)</name>
    <dbReference type="NCBI Taxonomy" id="246197"/>
    <lineage>
        <taxon>Bacteria</taxon>
        <taxon>Pseudomonadati</taxon>
        <taxon>Myxococcota</taxon>
        <taxon>Myxococcia</taxon>
        <taxon>Myxococcales</taxon>
        <taxon>Cystobacterineae</taxon>
        <taxon>Myxococcaceae</taxon>
        <taxon>Myxococcus</taxon>
    </lineage>
</organism>
<comment type="function">
    <text evidence="1">Specifically methylates the N7 position of guanine in position 527 of 16S rRNA.</text>
</comment>
<comment type="catalytic activity">
    <reaction evidence="1">
        <text>guanosine(527) in 16S rRNA + S-adenosyl-L-methionine = N(7)-methylguanosine(527) in 16S rRNA + S-adenosyl-L-homocysteine</text>
        <dbReference type="Rhea" id="RHEA:42732"/>
        <dbReference type="Rhea" id="RHEA-COMP:10209"/>
        <dbReference type="Rhea" id="RHEA-COMP:10210"/>
        <dbReference type="ChEBI" id="CHEBI:57856"/>
        <dbReference type="ChEBI" id="CHEBI:59789"/>
        <dbReference type="ChEBI" id="CHEBI:74269"/>
        <dbReference type="ChEBI" id="CHEBI:74480"/>
        <dbReference type="EC" id="2.1.1.170"/>
    </reaction>
</comment>
<comment type="subcellular location">
    <subcellularLocation>
        <location evidence="1">Cytoplasm</location>
    </subcellularLocation>
</comment>
<comment type="similarity">
    <text evidence="1">Belongs to the methyltransferase superfamily. RNA methyltransferase RsmG family.</text>
</comment>
<feature type="chain" id="PRO_1000010171" description="Ribosomal RNA small subunit methyltransferase G">
    <location>
        <begin position="1"/>
        <end position="217"/>
    </location>
</feature>
<feature type="binding site" evidence="1">
    <location>
        <position position="79"/>
    </location>
    <ligand>
        <name>S-adenosyl-L-methionine</name>
        <dbReference type="ChEBI" id="CHEBI:59789"/>
    </ligand>
</feature>
<feature type="binding site" evidence="1">
    <location>
        <position position="84"/>
    </location>
    <ligand>
        <name>S-adenosyl-L-methionine</name>
        <dbReference type="ChEBI" id="CHEBI:59789"/>
    </ligand>
</feature>
<feature type="binding site" evidence="1">
    <location>
        <begin position="130"/>
        <end position="131"/>
    </location>
    <ligand>
        <name>S-adenosyl-L-methionine</name>
        <dbReference type="ChEBI" id="CHEBI:59789"/>
    </ligand>
</feature>
<feature type="binding site" evidence="1">
    <location>
        <position position="148"/>
    </location>
    <ligand>
        <name>S-adenosyl-L-methionine</name>
        <dbReference type="ChEBI" id="CHEBI:59789"/>
    </ligand>
</feature>
<proteinExistence type="inferred from homology"/>
<protein>
    <recommendedName>
        <fullName evidence="1">Ribosomal RNA small subunit methyltransferase G</fullName>
        <ecNumber evidence="1">2.1.1.170</ecNumber>
    </recommendedName>
    <alternativeName>
        <fullName evidence="1">16S rRNA 7-methylguanosine methyltransferase</fullName>
        <shortName evidence="1">16S rRNA m7G methyltransferase</shortName>
    </alternativeName>
</protein>
<name>RSMG_MYXXD</name>
<gene>
    <name evidence="1" type="primary">rsmG</name>
    <name type="ordered locus">MXAN_7493</name>
</gene>